<gene>
    <name evidence="2" type="primary">Klhdc3</name>
</gene>
<organism>
    <name type="scientific">Rattus norvegicus</name>
    <name type="common">Rat</name>
    <dbReference type="NCBI Taxonomy" id="10116"/>
    <lineage>
        <taxon>Eukaryota</taxon>
        <taxon>Metazoa</taxon>
        <taxon>Chordata</taxon>
        <taxon>Craniata</taxon>
        <taxon>Vertebrata</taxon>
        <taxon>Euteleostomi</taxon>
        <taxon>Mammalia</taxon>
        <taxon>Eutheria</taxon>
        <taxon>Euarchontoglires</taxon>
        <taxon>Glires</taxon>
        <taxon>Rodentia</taxon>
        <taxon>Myomorpha</taxon>
        <taxon>Muroidea</taxon>
        <taxon>Muridae</taxon>
        <taxon>Murinae</taxon>
        <taxon>Rattus</taxon>
    </lineage>
</organism>
<keyword id="KW-0963">Cytoplasm</keyword>
<keyword id="KW-0880">Kelch repeat</keyword>
<keyword id="KW-0469">Meiosis</keyword>
<keyword id="KW-1185">Reference proteome</keyword>
<keyword id="KW-0677">Repeat</keyword>
<keyword id="KW-0833">Ubl conjugation pathway</keyword>
<accession>Q6AYI2</accession>
<sequence length="382" mass="43109">MLRWTVHLEGGPRRVNHAAVAVGHRVYSFGGYCSGEDYETLRQIDVHIFNAVSLRWTKLPPVRPAVRGQAPVVPYMRYGHSTVLIDDTVFLWGGRNDTEGACNVLYAFDVNTHKWSTPRVSGTVPGARDGHSACVLGKIMYIFGGYEQLADCFSNDIHKLDTSTMTWTLVCTKGNPARWRDFHSATMLGNHMYVFGGRADRFGPFHSNNEIYCNRIRVFDTRTEAWLDCPHTPVLPEGRRSHSAFGYNGELYIFGGYNARLNRHFHDLWKFNPGSFTWKKIEPKGKGPCPRRRQCCCIVGDKIVLFGGTSPSPEEGLGDEFDLIDHSDLHILDFSPSLKTLCKLAVIQYNLDQSCLPHDIRWELNAMTTNSNISRPIVSSHG</sequence>
<reference key="1">
    <citation type="journal article" date="2004" name="Genome Res.">
        <title>The status, quality, and expansion of the NIH full-length cDNA project: the Mammalian Gene Collection (MGC).</title>
        <authorList>
            <consortium name="The MGC Project Team"/>
        </authorList>
    </citation>
    <scope>NUCLEOTIDE SEQUENCE [LARGE SCALE MRNA]</scope>
    <source>
        <tissue>Testis</tissue>
    </source>
</reference>
<name>KLDC3_RAT</name>
<protein>
    <recommendedName>
        <fullName evidence="1">Kelch domain-containing protein 3</fullName>
    </recommendedName>
</protein>
<feature type="chain" id="PRO_0000228997" description="Kelch domain-containing protein 3">
    <location>
        <begin position="1"/>
        <end position="382"/>
    </location>
</feature>
<feature type="repeat" description="Kelch 1">
    <location>
        <begin position="25"/>
        <end position="77"/>
    </location>
</feature>
<feature type="repeat" description="Kelch 2">
    <location>
        <begin position="88"/>
        <end position="138"/>
    </location>
</feature>
<feature type="repeat" description="Kelch 3">
    <location>
        <begin position="139"/>
        <end position="189"/>
    </location>
</feature>
<feature type="repeat" description="Kelch 4">
    <location>
        <begin position="191"/>
        <end position="249"/>
    </location>
</feature>
<feature type="repeat" description="Kelch 5">
    <location>
        <begin position="251"/>
        <end position="301"/>
    </location>
</feature>
<dbReference type="EMBL" id="BC079035">
    <property type="protein sequence ID" value="AAH79035.1"/>
    <property type="molecule type" value="mRNA"/>
</dbReference>
<dbReference type="RefSeq" id="NP_001012203.1">
    <property type="nucleotide sequence ID" value="NM_001012203.1"/>
</dbReference>
<dbReference type="RefSeq" id="XP_006244604.1">
    <property type="nucleotide sequence ID" value="XM_006244542.5"/>
</dbReference>
<dbReference type="SMR" id="Q6AYI2"/>
<dbReference type="FunCoup" id="Q6AYI2">
    <property type="interactions" value="2585"/>
</dbReference>
<dbReference type="STRING" id="10116.ENSRNOP00000023979"/>
<dbReference type="PhosphoSitePlus" id="Q6AYI2"/>
<dbReference type="PaxDb" id="10116-ENSRNOP00000023979"/>
<dbReference type="Ensembl" id="ENSRNOT00000023979.7">
    <property type="protein sequence ID" value="ENSRNOP00000023979.4"/>
    <property type="gene ID" value="ENSRNOG00000017495.7"/>
</dbReference>
<dbReference type="GeneID" id="363192"/>
<dbReference type="KEGG" id="rno:363192"/>
<dbReference type="UCSC" id="RGD:1307105">
    <property type="organism name" value="rat"/>
</dbReference>
<dbReference type="AGR" id="RGD:1307105"/>
<dbReference type="CTD" id="116138"/>
<dbReference type="RGD" id="1307105">
    <property type="gene designation" value="Klhdc3"/>
</dbReference>
<dbReference type="eggNOG" id="KOG4693">
    <property type="taxonomic scope" value="Eukaryota"/>
</dbReference>
<dbReference type="GeneTree" id="ENSGT00940000157952"/>
<dbReference type="HOGENOM" id="CLU_045453_0_0_1"/>
<dbReference type="InParanoid" id="Q6AYI2"/>
<dbReference type="PhylomeDB" id="Q6AYI2"/>
<dbReference type="TreeFam" id="TF354289"/>
<dbReference type="UniPathway" id="UPA00143"/>
<dbReference type="PRO" id="PR:Q6AYI2"/>
<dbReference type="Proteomes" id="UP000002494">
    <property type="component" value="Chromosome 9"/>
</dbReference>
<dbReference type="Bgee" id="ENSRNOG00000017495">
    <property type="expression patterns" value="Expressed in testis and 19 other cell types or tissues"/>
</dbReference>
<dbReference type="GO" id="GO:0000785">
    <property type="term" value="C:chromatin"/>
    <property type="evidence" value="ECO:0000266"/>
    <property type="project" value="RGD"/>
</dbReference>
<dbReference type="GO" id="GO:0031462">
    <property type="term" value="C:Cul2-RING ubiquitin ligase complex"/>
    <property type="evidence" value="ECO:0000250"/>
    <property type="project" value="UniProtKB"/>
</dbReference>
<dbReference type="GO" id="GO:0005737">
    <property type="term" value="C:cytoplasm"/>
    <property type="evidence" value="ECO:0000266"/>
    <property type="project" value="RGD"/>
</dbReference>
<dbReference type="GO" id="GO:0003682">
    <property type="term" value="F:chromatin binding"/>
    <property type="evidence" value="ECO:0000266"/>
    <property type="project" value="RGD"/>
</dbReference>
<dbReference type="GO" id="GO:1990756">
    <property type="term" value="F:ubiquitin-like ligase-substrate adaptor activity"/>
    <property type="evidence" value="ECO:0000250"/>
    <property type="project" value="UniProtKB"/>
</dbReference>
<dbReference type="GO" id="GO:0051321">
    <property type="term" value="P:meiotic cell cycle"/>
    <property type="evidence" value="ECO:0007669"/>
    <property type="project" value="UniProtKB-KW"/>
</dbReference>
<dbReference type="GO" id="GO:0043161">
    <property type="term" value="P:proteasome-mediated ubiquitin-dependent protein catabolic process"/>
    <property type="evidence" value="ECO:0000250"/>
    <property type="project" value="UniProtKB"/>
</dbReference>
<dbReference type="GO" id="GO:0016567">
    <property type="term" value="P:protein ubiquitination"/>
    <property type="evidence" value="ECO:0007669"/>
    <property type="project" value="UniProtKB-UniPathway"/>
</dbReference>
<dbReference type="GO" id="GO:0140627">
    <property type="term" value="P:ubiquitin-dependent protein catabolic process via the C-end degron rule pathway"/>
    <property type="evidence" value="ECO:0000266"/>
    <property type="project" value="RGD"/>
</dbReference>
<dbReference type="FunFam" id="2.120.10.80:FF:000074">
    <property type="entry name" value="Kelch domain containing 3"/>
    <property type="match status" value="1"/>
</dbReference>
<dbReference type="FunFam" id="2.120.10.80:FF:000136">
    <property type="entry name" value="Kelch domain containing 3"/>
    <property type="match status" value="1"/>
</dbReference>
<dbReference type="Gene3D" id="2.120.10.80">
    <property type="entry name" value="Kelch-type beta propeller"/>
    <property type="match status" value="2"/>
</dbReference>
<dbReference type="InterPro" id="IPR015915">
    <property type="entry name" value="Kelch-typ_b-propeller"/>
</dbReference>
<dbReference type="InterPro" id="IPR052637">
    <property type="entry name" value="KLHDC3-like"/>
</dbReference>
<dbReference type="PANTHER" id="PTHR46461">
    <property type="entry name" value="KELCH DOMAIN-CONTAINING PROTEIN 3"/>
    <property type="match status" value="1"/>
</dbReference>
<dbReference type="PANTHER" id="PTHR46461:SF1">
    <property type="entry name" value="KELCH DOMAIN-CONTAINING PROTEIN 3"/>
    <property type="match status" value="1"/>
</dbReference>
<dbReference type="Pfam" id="PF13964">
    <property type="entry name" value="Kelch_6"/>
    <property type="match status" value="1"/>
</dbReference>
<dbReference type="Pfam" id="PF24681">
    <property type="entry name" value="Kelch_KLHDC2_KLHL20_DRC7"/>
    <property type="match status" value="1"/>
</dbReference>
<dbReference type="SUPFAM" id="SSF117281">
    <property type="entry name" value="Kelch motif"/>
    <property type="match status" value="2"/>
</dbReference>
<comment type="function">
    <text evidence="1">Substrate-recognition component of a Cul2-RING (CRL2) E3 ubiquitin-protein ligase complex of the DesCEND (destruction via C-end degrons) pathway, which recognizes a C-degron located at the extreme C terminus of target proteins, leading to their ubiquitination and degradation. The C-degron recognized by the DesCEND pathway is usually a motif of less than ten residues and can be present in full-length proteins, truncated proteins or proteolytically cleaved forms. The CRL2(KLHDC3) complex specifically recognizes proteins with a glycine (Gly) at the C-terminus, leading to their ubiquitination and degradation: recognizes the C-terminal -Arg-(Xaa)n-Arg-Gly, -Arg-(Xaa)n-Lys-Gly, and -Arg-(Xaa)n-Gln-Gly degrons. The CRL2(KLHDC3) complex mediates ubiquitination and degradation of truncated SELENOV and SEPHS2 selenoproteins produced by failed UGA/Sec decoding, which end with a glycine. May be involved in meiotic recombination process.</text>
</comment>
<comment type="pathway">
    <text evidence="1">Protein modification; protein ubiquitination.</text>
</comment>
<comment type="subunit">
    <text evidence="1">Component of a CRL2(KLHDC3) complex, also named ECS(KLHDC3) complex, composed of CUL2, Elongin BC (ELOB and ELOC), RBX1 and substrate-specific adapter KLHDC3 (By similarity). May form oligomers as a KLHDC3-ELOB-ELOC complex; this interaction is likely autoinhibitory for the E3 ligase complex (By similarity).</text>
</comment>
<comment type="subcellular location">
    <subcellularLocation>
        <location evidence="1">Cytoplasm</location>
    </subcellularLocation>
</comment>
<evidence type="ECO:0000250" key="1">
    <source>
        <dbReference type="UniProtKB" id="Q9BQ90"/>
    </source>
</evidence>
<evidence type="ECO:0000312" key="2">
    <source>
        <dbReference type="RGD" id="1307105"/>
    </source>
</evidence>
<proteinExistence type="evidence at transcript level"/>